<keyword id="KW-0687">Ribonucleoprotein</keyword>
<keyword id="KW-0689">Ribosomal protein</keyword>
<feature type="chain" id="PRO_0000259122" description="Large ribosomal subunit protein bL31B">
    <location>
        <begin position="1"/>
        <end position="84"/>
    </location>
</feature>
<name>RL31B_STAA3</name>
<sequence>MKQGIHPEYHQVIFLDTTTNFKFLSGSTKTSSEMMEWEDGKEYPVIRLDISSDSHPFYTGRQKFAAADGRVERFNKKFGLKSNN</sequence>
<protein>
    <recommendedName>
        <fullName evidence="1">Large ribosomal subunit protein bL31B</fullName>
    </recommendedName>
    <alternativeName>
        <fullName evidence="2">50S ribosomal protein L31 type B</fullName>
    </alternativeName>
</protein>
<dbReference type="EMBL" id="CP000255">
    <property type="protein sequence ID" value="ABD21858.1"/>
    <property type="molecule type" value="Genomic_DNA"/>
</dbReference>
<dbReference type="RefSeq" id="WP_000808968.1">
    <property type="nucleotide sequence ID" value="NZ_CP027476.1"/>
</dbReference>
<dbReference type="SMR" id="Q2FF08"/>
<dbReference type="KEGG" id="saa:SAUSA300_2074"/>
<dbReference type="HOGENOM" id="CLU_114306_2_2_9"/>
<dbReference type="OMA" id="YRLVAFK"/>
<dbReference type="Proteomes" id="UP000001939">
    <property type="component" value="Chromosome"/>
</dbReference>
<dbReference type="GO" id="GO:1990904">
    <property type="term" value="C:ribonucleoprotein complex"/>
    <property type="evidence" value="ECO:0007669"/>
    <property type="project" value="UniProtKB-KW"/>
</dbReference>
<dbReference type="GO" id="GO:0005840">
    <property type="term" value="C:ribosome"/>
    <property type="evidence" value="ECO:0007669"/>
    <property type="project" value="UniProtKB-KW"/>
</dbReference>
<dbReference type="GO" id="GO:0003735">
    <property type="term" value="F:structural constituent of ribosome"/>
    <property type="evidence" value="ECO:0007669"/>
    <property type="project" value="InterPro"/>
</dbReference>
<dbReference type="GO" id="GO:0006412">
    <property type="term" value="P:translation"/>
    <property type="evidence" value="ECO:0007669"/>
    <property type="project" value="UniProtKB-UniRule"/>
</dbReference>
<dbReference type="Gene3D" id="4.10.830.30">
    <property type="entry name" value="Ribosomal protein L31"/>
    <property type="match status" value="1"/>
</dbReference>
<dbReference type="HAMAP" id="MF_00502">
    <property type="entry name" value="Ribosomal_bL31_2"/>
    <property type="match status" value="1"/>
</dbReference>
<dbReference type="InterPro" id="IPR034704">
    <property type="entry name" value="Ribosomal_bL28/bL31-like_sf"/>
</dbReference>
<dbReference type="InterPro" id="IPR002150">
    <property type="entry name" value="Ribosomal_bL31"/>
</dbReference>
<dbReference type="InterPro" id="IPR027493">
    <property type="entry name" value="Ribosomal_bL31_B"/>
</dbReference>
<dbReference type="InterPro" id="IPR042105">
    <property type="entry name" value="Ribosomal_bL31_sf"/>
</dbReference>
<dbReference type="NCBIfam" id="TIGR00105">
    <property type="entry name" value="L31"/>
    <property type="match status" value="1"/>
</dbReference>
<dbReference type="NCBIfam" id="NF002462">
    <property type="entry name" value="PRK01678.1"/>
    <property type="match status" value="1"/>
</dbReference>
<dbReference type="PANTHER" id="PTHR33280">
    <property type="entry name" value="50S RIBOSOMAL PROTEIN L31, CHLOROPLASTIC"/>
    <property type="match status" value="1"/>
</dbReference>
<dbReference type="PANTHER" id="PTHR33280:SF1">
    <property type="entry name" value="LARGE RIBOSOMAL SUBUNIT PROTEIN BL31C"/>
    <property type="match status" value="1"/>
</dbReference>
<dbReference type="Pfam" id="PF01197">
    <property type="entry name" value="Ribosomal_L31"/>
    <property type="match status" value="1"/>
</dbReference>
<dbReference type="PRINTS" id="PR01249">
    <property type="entry name" value="RIBOSOMALL31"/>
</dbReference>
<dbReference type="SUPFAM" id="SSF143800">
    <property type="entry name" value="L28p-like"/>
    <property type="match status" value="1"/>
</dbReference>
<dbReference type="PROSITE" id="PS01143">
    <property type="entry name" value="RIBOSOMAL_L31"/>
    <property type="match status" value="1"/>
</dbReference>
<evidence type="ECO:0000255" key="1">
    <source>
        <dbReference type="HAMAP-Rule" id="MF_00502"/>
    </source>
</evidence>
<evidence type="ECO:0000305" key="2"/>
<proteinExistence type="inferred from homology"/>
<gene>
    <name evidence="1" type="primary">rpmE2</name>
    <name type="ordered locus">SAUSA300_2074</name>
</gene>
<reference key="1">
    <citation type="journal article" date="2006" name="Lancet">
        <title>Complete genome sequence of USA300, an epidemic clone of community-acquired meticillin-resistant Staphylococcus aureus.</title>
        <authorList>
            <person name="Diep B.A."/>
            <person name="Gill S.R."/>
            <person name="Chang R.F."/>
            <person name="Phan T.H."/>
            <person name="Chen J.H."/>
            <person name="Davidson M.G."/>
            <person name="Lin F."/>
            <person name="Lin J."/>
            <person name="Carleton H.A."/>
            <person name="Mongodin E.F."/>
            <person name="Sensabaugh G.F."/>
            <person name="Perdreau-Remington F."/>
        </authorList>
    </citation>
    <scope>NUCLEOTIDE SEQUENCE [LARGE SCALE GENOMIC DNA]</scope>
    <source>
        <strain>USA300</strain>
    </source>
</reference>
<accession>Q2FF08</accession>
<organism>
    <name type="scientific">Staphylococcus aureus (strain USA300)</name>
    <dbReference type="NCBI Taxonomy" id="367830"/>
    <lineage>
        <taxon>Bacteria</taxon>
        <taxon>Bacillati</taxon>
        <taxon>Bacillota</taxon>
        <taxon>Bacilli</taxon>
        <taxon>Bacillales</taxon>
        <taxon>Staphylococcaceae</taxon>
        <taxon>Staphylococcus</taxon>
    </lineage>
</organism>
<comment type="subunit">
    <text evidence="1">Part of the 50S ribosomal subunit.</text>
</comment>
<comment type="similarity">
    <text evidence="1">Belongs to the bacterial ribosomal protein bL31 family. Type B subfamily.</text>
</comment>